<feature type="chain" id="PRO_1000082854" description="ATP-dependent RNA helicase RhlB">
    <location>
        <begin position="1"/>
        <end position="421"/>
    </location>
</feature>
<feature type="domain" description="Helicase ATP-binding" evidence="1">
    <location>
        <begin position="40"/>
        <end position="219"/>
    </location>
</feature>
<feature type="domain" description="Helicase C-terminal" evidence="1">
    <location>
        <begin position="245"/>
        <end position="390"/>
    </location>
</feature>
<feature type="region of interest" description="Disordered" evidence="2">
    <location>
        <begin position="396"/>
        <end position="421"/>
    </location>
</feature>
<feature type="short sequence motif" description="Q motif">
    <location>
        <begin position="9"/>
        <end position="37"/>
    </location>
</feature>
<feature type="short sequence motif" description="DEAD box">
    <location>
        <begin position="165"/>
        <end position="168"/>
    </location>
</feature>
<feature type="compositionally biased region" description="Low complexity" evidence="2">
    <location>
        <begin position="402"/>
        <end position="414"/>
    </location>
</feature>
<feature type="binding site" evidence="1">
    <location>
        <begin position="53"/>
        <end position="60"/>
    </location>
    <ligand>
        <name>ATP</name>
        <dbReference type="ChEBI" id="CHEBI:30616"/>
    </ligand>
</feature>
<sequence length="421" mass="47093">MSKTHLTEQKFSDFALHPQVVEALEKKGFYNCTPIQALALPLTLAGRDVAGQAQTGTGKTMAFLTSTFHYLLSHPAIDDRKVNQPRALIMAPTRELAVQIHADAEPLAQATGLKLGLAYGGDGYDKQLKVLESGVDILIGTTGRLIDYAKQNHINLGAIQVVVLDEADRMYDLGFIKDIRWLFRRMPPAAQRLNMLFSATLSYRVRELAFEQMNNAEYVEVEPEQKTGHRIKEELFYPSNEEKMRLLQTLIEEEWPDRAIIFANTKHRCEDIWGHLAADGHRVGLLTGDVAQKKRLRILDEFTRGDLDILVATDVAARGLHIPAVTHVFNYDLPDDCEDYVHRIGRTGRAGASGHSISLACEEYALNLPAIESYIGHSIPVSKYNPEALMNDLPKPLRLTRSRPGNGPRRAGAPRNRRRSG</sequence>
<accession>A9MXF3</accession>
<keyword id="KW-0067">ATP-binding</keyword>
<keyword id="KW-0963">Cytoplasm</keyword>
<keyword id="KW-0347">Helicase</keyword>
<keyword id="KW-0378">Hydrolase</keyword>
<keyword id="KW-0547">Nucleotide-binding</keyword>
<keyword id="KW-0694">RNA-binding</keyword>
<evidence type="ECO:0000255" key="1">
    <source>
        <dbReference type="HAMAP-Rule" id="MF_00661"/>
    </source>
</evidence>
<evidence type="ECO:0000256" key="2">
    <source>
        <dbReference type="SAM" id="MobiDB-lite"/>
    </source>
</evidence>
<dbReference type="EC" id="3.6.4.13" evidence="1"/>
<dbReference type="EMBL" id="CP000886">
    <property type="protein sequence ID" value="ABX70164.1"/>
    <property type="molecule type" value="Genomic_DNA"/>
</dbReference>
<dbReference type="RefSeq" id="WP_000047525.1">
    <property type="nucleotide sequence ID" value="NC_010102.1"/>
</dbReference>
<dbReference type="SMR" id="A9MXF3"/>
<dbReference type="KEGG" id="spq:SPAB_04860"/>
<dbReference type="PATRIC" id="fig|1016998.12.peg.4568"/>
<dbReference type="HOGENOM" id="CLU_003041_1_3_6"/>
<dbReference type="BioCyc" id="SENT1016998:SPAB_RS19755-MONOMER"/>
<dbReference type="Proteomes" id="UP000008556">
    <property type="component" value="Chromosome"/>
</dbReference>
<dbReference type="GO" id="GO:0005829">
    <property type="term" value="C:cytosol"/>
    <property type="evidence" value="ECO:0007669"/>
    <property type="project" value="TreeGrafter"/>
</dbReference>
<dbReference type="GO" id="GO:0005524">
    <property type="term" value="F:ATP binding"/>
    <property type="evidence" value="ECO:0007669"/>
    <property type="project" value="UniProtKB-UniRule"/>
</dbReference>
<dbReference type="GO" id="GO:0016887">
    <property type="term" value="F:ATP hydrolysis activity"/>
    <property type="evidence" value="ECO:0007669"/>
    <property type="project" value="RHEA"/>
</dbReference>
<dbReference type="GO" id="GO:0003723">
    <property type="term" value="F:RNA binding"/>
    <property type="evidence" value="ECO:0007669"/>
    <property type="project" value="UniProtKB-UniRule"/>
</dbReference>
<dbReference type="GO" id="GO:0003724">
    <property type="term" value="F:RNA helicase activity"/>
    <property type="evidence" value="ECO:0007669"/>
    <property type="project" value="UniProtKB-UniRule"/>
</dbReference>
<dbReference type="GO" id="GO:0006401">
    <property type="term" value="P:RNA catabolic process"/>
    <property type="evidence" value="ECO:0007669"/>
    <property type="project" value="UniProtKB-UniRule"/>
</dbReference>
<dbReference type="CDD" id="cd00268">
    <property type="entry name" value="DEADc"/>
    <property type="match status" value="1"/>
</dbReference>
<dbReference type="CDD" id="cd18787">
    <property type="entry name" value="SF2_C_DEAD"/>
    <property type="match status" value="1"/>
</dbReference>
<dbReference type="FunFam" id="3.40.50.300:FF:000008">
    <property type="entry name" value="ATP-dependent RNA helicase RhlB"/>
    <property type="match status" value="1"/>
</dbReference>
<dbReference type="FunFam" id="3.40.50.300:FF:000312">
    <property type="entry name" value="ATP-dependent RNA helicase RhlB"/>
    <property type="match status" value="1"/>
</dbReference>
<dbReference type="Gene3D" id="3.40.50.300">
    <property type="entry name" value="P-loop containing nucleotide triphosphate hydrolases"/>
    <property type="match status" value="2"/>
</dbReference>
<dbReference type="HAMAP" id="MF_00661">
    <property type="entry name" value="DEAD_helicase_RhlB"/>
    <property type="match status" value="1"/>
</dbReference>
<dbReference type="InterPro" id="IPR011545">
    <property type="entry name" value="DEAD/DEAH_box_helicase_dom"/>
</dbReference>
<dbReference type="InterPro" id="IPR050079">
    <property type="entry name" value="DEAD_box_RNA_helicase"/>
</dbReference>
<dbReference type="InterPro" id="IPR014001">
    <property type="entry name" value="Helicase_ATP-bd"/>
</dbReference>
<dbReference type="InterPro" id="IPR001650">
    <property type="entry name" value="Helicase_C-like"/>
</dbReference>
<dbReference type="InterPro" id="IPR027417">
    <property type="entry name" value="P-loop_NTPase"/>
</dbReference>
<dbReference type="InterPro" id="IPR000629">
    <property type="entry name" value="RNA-helicase_DEAD-box_CS"/>
</dbReference>
<dbReference type="InterPro" id="IPR023554">
    <property type="entry name" value="RNA_helicase_ATP-dep_RhlB"/>
</dbReference>
<dbReference type="InterPro" id="IPR014014">
    <property type="entry name" value="RNA_helicase_DEAD_Q_motif"/>
</dbReference>
<dbReference type="NCBIfam" id="NF003419">
    <property type="entry name" value="PRK04837.1"/>
    <property type="match status" value="1"/>
</dbReference>
<dbReference type="PANTHER" id="PTHR47959:SF10">
    <property type="entry name" value="ATP-DEPENDENT RNA HELICASE RHLB"/>
    <property type="match status" value="1"/>
</dbReference>
<dbReference type="PANTHER" id="PTHR47959">
    <property type="entry name" value="ATP-DEPENDENT RNA HELICASE RHLE-RELATED"/>
    <property type="match status" value="1"/>
</dbReference>
<dbReference type="Pfam" id="PF00270">
    <property type="entry name" value="DEAD"/>
    <property type="match status" value="1"/>
</dbReference>
<dbReference type="Pfam" id="PF00271">
    <property type="entry name" value="Helicase_C"/>
    <property type="match status" value="1"/>
</dbReference>
<dbReference type="SMART" id="SM00487">
    <property type="entry name" value="DEXDc"/>
    <property type="match status" value="1"/>
</dbReference>
<dbReference type="SMART" id="SM00490">
    <property type="entry name" value="HELICc"/>
    <property type="match status" value="1"/>
</dbReference>
<dbReference type="SUPFAM" id="SSF52540">
    <property type="entry name" value="P-loop containing nucleoside triphosphate hydrolases"/>
    <property type="match status" value="1"/>
</dbReference>
<dbReference type="PROSITE" id="PS00039">
    <property type="entry name" value="DEAD_ATP_HELICASE"/>
    <property type="match status" value="1"/>
</dbReference>
<dbReference type="PROSITE" id="PS51192">
    <property type="entry name" value="HELICASE_ATP_BIND_1"/>
    <property type="match status" value="1"/>
</dbReference>
<dbReference type="PROSITE" id="PS51194">
    <property type="entry name" value="HELICASE_CTER"/>
    <property type="match status" value="1"/>
</dbReference>
<dbReference type="PROSITE" id="PS51195">
    <property type="entry name" value="Q_MOTIF"/>
    <property type="match status" value="1"/>
</dbReference>
<proteinExistence type="inferred from homology"/>
<reference key="1">
    <citation type="submission" date="2007-11" db="EMBL/GenBank/DDBJ databases">
        <authorList>
            <consortium name="The Salmonella enterica serovar Paratyphi B Genome Sequencing Project"/>
            <person name="McClelland M."/>
            <person name="Sanderson E.K."/>
            <person name="Porwollik S."/>
            <person name="Spieth J."/>
            <person name="Clifton W.S."/>
            <person name="Fulton R."/>
            <person name="Cordes M."/>
            <person name="Wollam A."/>
            <person name="Shah N."/>
            <person name="Pepin K."/>
            <person name="Bhonagiri V."/>
            <person name="Nash W."/>
            <person name="Johnson M."/>
            <person name="Thiruvilangam P."/>
            <person name="Wilson R."/>
        </authorList>
    </citation>
    <scope>NUCLEOTIDE SEQUENCE [LARGE SCALE GENOMIC DNA]</scope>
    <source>
        <strain>ATCC BAA-1250 / SPB7</strain>
    </source>
</reference>
<organism>
    <name type="scientific">Salmonella paratyphi B (strain ATCC BAA-1250 / SPB7)</name>
    <dbReference type="NCBI Taxonomy" id="1016998"/>
    <lineage>
        <taxon>Bacteria</taxon>
        <taxon>Pseudomonadati</taxon>
        <taxon>Pseudomonadota</taxon>
        <taxon>Gammaproteobacteria</taxon>
        <taxon>Enterobacterales</taxon>
        <taxon>Enterobacteriaceae</taxon>
        <taxon>Salmonella</taxon>
    </lineage>
</organism>
<protein>
    <recommendedName>
        <fullName evidence="1">ATP-dependent RNA helicase RhlB</fullName>
        <ecNumber evidence="1">3.6.4.13</ecNumber>
    </recommendedName>
</protein>
<gene>
    <name evidence="1" type="primary">rhlB</name>
    <name type="ordered locus">SPAB_04860</name>
</gene>
<name>RHLB_SALPB</name>
<comment type="function">
    <text evidence="1">DEAD-box RNA helicase involved in RNA degradation. Has RNA-dependent ATPase activity and unwinds double-stranded RNA.</text>
</comment>
<comment type="catalytic activity">
    <reaction evidence="1">
        <text>ATP + H2O = ADP + phosphate + H(+)</text>
        <dbReference type="Rhea" id="RHEA:13065"/>
        <dbReference type="ChEBI" id="CHEBI:15377"/>
        <dbReference type="ChEBI" id="CHEBI:15378"/>
        <dbReference type="ChEBI" id="CHEBI:30616"/>
        <dbReference type="ChEBI" id="CHEBI:43474"/>
        <dbReference type="ChEBI" id="CHEBI:456216"/>
        <dbReference type="EC" id="3.6.4.13"/>
    </reaction>
</comment>
<comment type="subunit">
    <text evidence="1">Component of the RNA degradosome, which is a multiprotein complex involved in RNA processing and mRNA degradation.</text>
</comment>
<comment type="subcellular location">
    <subcellularLocation>
        <location evidence="1">Cytoplasm</location>
    </subcellularLocation>
</comment>
<comment type="similarity">
    <text evidence="1">Belongs to the DEAD box helicase family. RhlB subfamily.</text>
</comment>